<organism>
    <name type="scientific">Escherichia coli O1:K1 / APEC</name>
    <dbReference type="NCBI Taxonomy" id="405955"/>
    <lineage>
        <taxon>Bacteria</taxon>
        <taxon>Pseudomonadati</taxon>
        <taxon>Pseudomonadota</taxon>
        <taxon>Gammaproteobacteria</taxon>
        <taxon>Enterobacterales</taxon>
        <taxon>Enterobacteriaceae</taxon>
        <taxon>Escherichia</taxon>
    </lineage>
</organism>
<proteinExistence type="inferred from homology"/>
<dbReference type="EC" id="4.1.1.49" evidence="1"/>
<dbReference type="EMBL" id="CP000468">
    <property type="protein sequence ID" value="ABJ02869.1"/>
    <property type="molecule type" value="Genomic_DNA"/>
</dbReference>
<dbReference type="RefSeq" id="WP_001309803.1">
    <property type="nucleotide sequence ID" value="NZ_CADILS010000030.1"/>
</dbReference>
<dbReference type="SMR" id="A1AGS9"/>
<dbReference type="GeneID" id="86862199"/>
<dbReference type="KEGG" id="ecv:APECO1_3061"/>
<dbReference type="HOGENOM" id="CLU_018247_0_1_6"/>
<dbReference type="UniPathway" id="UPA00138"/>
<dbReference type="Proteomes" id="UP000008216">
    <property type="component" value="Chromosome"/>
</dbReference>
<dbReference type="GO" id="GO:0005829">
    <property type="term" value="C:cytosol"/>
    <property type="evidence" value="ECO:0007669"/>
    <property type="project" value="TreeGrafter"/>
</dbReference>
<dbReference type="GO" id="GO:0005524">
    <property type="term" value="F:ATP binding"/>
    <property type="evidence" value="ECO:0007669"/>
    <property type="project" value="UniProtKB-UniRule"/>
</dbReference>
<dbReference type="GO" id="GO:0046872">
    <property type="term" value="F:metal ion binding"/>
    <property type="evidence" value="ECO:0007669"/>
    <property type="project" value="UniProtKB-KW"/>
</dbReference>
<dbReference type="GO" id="GO:0004612">
    <property type="term" value="F:phosphoenolpyruvate carboxykinase (ATP) activity"/>
    <property type="evidence" value="ECO:0007669"/>
    <property type="project" value="UniProtKB-UniRule"/>
</dbReference>
<dbReference type="GO" id="GO:0006094">
    <property type="term" value="P:gluconeogenesis"/>
    <property type="evidence" value="ECO:0007669"/>
    <property type="project" value="UniProtKB-UniRule"/>
</dbReference>
<dbReference type="CDD" id="cd00484">
    <property type="entry name" value="PEPCK_ATP"/>
    <property type="match status" value="1"/>
</dbReference>
<dbReference type="FunFam" id="2.170.8.10:FF:000001">
    <property type="entry name" value="Phosphoenolpyruvate carboxykinase (ATP)"/>
    <property type="match status" value="1"/>
</dbReference>
<dbReference type="FunFam" id="3.40.449.10:FF:000001">
    <property type="entry name" value="Phosphoenolpyruvate carboxykinase (ATP)"/>
    <property type="match status" value="1"/>
</dbReference>
<dbReference type="Gene3D" id="3.90.228.20">
    <property type="match status" value="1"/>
</dbReference>
<dbReference type="Gene3D" id="3.40.449.10">
    <property type="entry name" value="Phosphoenolpyruvate Carboxykinase, domain 1"/>
    <property type="match status" value="1"/>
</dbReference>
<dbReference type="Gene3D" id="2.170.8.10">
    <property type="entry name" value="Phosphoenolpyruvate Carboxykinase, domain 2"/>
    <property type="match status" value="1"/>
</dbReference>
<dbReference type="HAMAP" id="MF_00453">
    <property type="entry name" value="PEPCK_ATP"/>
    <property type="match status" value="1"/>
</dbReference>
<dbReference type="InterPro" id="IPR001272">
    <property type="entry name" value="PEP_carboxykinase_ATP"/>
</dbReference>
<dbReference type="InterPro" id="IPR013035">
    <property type="entry name" value="PEP_carboxykinase_C"/>
</dbReference>
<dbReference type="InterPro" id="IPR008210">
    <property type="entry name" value="PEP_carboxykinase_N"/>
</dbReference>
<dbReference type="InterPro" id="IPR015994">
    <property type="entry name" value="PEPCK_ATP_CS"/>
</dbReference>
<dbReference type="NCBIfam" id="TIGR00224">
    <property type="entry name" value="pckA"/>
    <property type="match status" value="1"/>
</dbReference>
<dbReference type="NCBIfam" id="NF006819">
    <property type="entry name" value="PRK09344.1-1"/>
    <property type="match status" value="1"/>
</dbReference>
<dbReference type="NCBIfam" id="NF006820">
    <property type="entry name" value="PRK09344.1-2"/>
    <property type="match status" value="1"/>
</dbReference>
<dbReference type="NCBIfam" id="NF006821">
    <property type="entry name" value="PRK09344.1-3"/>
    <property type="match status" value="1"/>
</dbReference>
<dbReference type="PANTHER" id="PTHR30031:SF0">
    <property type="entry name" value="PHOSPHOENOLPYRUVATE CARBOXYKINASE (ATP)"/>
    <property type="match status" value="1"/>
</dbReference>
<dbReference type="PANTHER" id="PTHR30031">
    <property type="entry name" value="PHOSPHOENOLPYRUVATE CARBOXYKINASE ATP"/>
    <property type="match status" value="1"/>
</dbReference>
<dbReference type="Pfam" id="PF01293">
    <property type="entry name" value="PEPCK_ATP"/>
    <property type="match status" value="1"/>
</dbReference>
<dbReference type="PIRSF" id="PIRSF006294">
    <property type="entry name" value="PEP_crbxkin"/>
    <property type="match status" value="1"/>
</dbReference>
<dbReference type="SUPFAM" id="SSF68923">
    <property type="entry name" value="PEP carboxykinase N-terminal domain"/>
    <property type="match status" value="1"/>
</dbReference>
<dbReference type="SUPFAM" id="SSF53795">
    <property type="entry name" value="PEP carboxykinase-like"/>
    <property type="match status" value="1"/>
</dbReference>
<dbReference type="PROSITE" id="PS00532">
    <property type="entry name" value="PEPCK_ATP"/>
    <property type="match status" value="1"/>
</dbReference>
<feature type="chain" id="PRO_1000026323" description="Phosphoenolpyruvate carboxykinase (ATP)">
    <location>
        <begin position="1"/>
        <end position="540"/>
    </location>
</feature>
<feature type="binding site" evidence="1">
    <location>
        <position position="65"/>
    </location>
    <ligand>
        <name>substrate</name>
    </ligand>
</feature>
<feature type="binding site" evidence="1">
    <location>
        <position position="207"/>
    </location>
    <ligand>
        <name>substrate</name>
    </ligand>
</feature>
<feature type="binding site" evidence="1">
    <location>
        <position position="213"/>
    </location>
    <ligand>
        <name>ATP</name>
        <dbReference type="ChEBI" id="CHEBI:30616"/>
    </ligand>
</feature>
<feature type="binding site" evidence="1">
    <location>
        <position position="213"/>
    </location>
    <ligand>
        <name>Mn(2+)</name>
        <dbReference type="ChEBI" id="CHEBI:29035"/>
    </ligand>
</feature>
<feature type="binding site" evidence="1">
    <location>
        <position position="213"/>
    </location>
    <ligand>
        <name>substrate</name>
    </ligand>
</feature>
<feature type="binding site" evidence="1">
    <location>
        <position position="232"/>
    </location>
    <ligand>
        <name>ATP</name>
        <dbReference type="ChEBI" id="CHEBI:30616"/>
    </ligand>
</feature>
<feature type="binding site" evidence="1">
    <location>
        <position position="232"/>
    </location>
    <ligand>
        <name>Mn(2+)</name>
        <dbReference type="ChEBI" id="CHEBI:29035"/>
    </ligand>
</feature>
<feature type="binding site" evidence="1">
    <location>
        <begin position="248"/>
        <end position="256"/>
    </location>
    <ligand>
        <name>ATP</name>
        <dbReference type="ChEBI" id="CHEBI:30616"/>
    </ligand>
</feature>
<feature type="binding site" evidence="1">
    <location>
        <position position="269"/>
    </location>
    <ligand>
        <name>Mn(2+)</name>
        <dbReference type="ChEBI" id="CHEBI:29035"/>
    </ligand>
</feature>
<feature type="binding site" evidence="1">
    <location>
        <position position="297"/>
    </location>
    <ligand>
        <name>ATP</name>
        <dbReference type="ChEBI" id="CHEBI:30616"/>
    </ligand>
</feature>
<feature type="binding site" evidence="1">
    <location>
        <position position="333"/>
    </location>
    <ligand>
        <name>ATP</name>
        <dbReference type="ChEBI" id="CHEBI:30616"/>
    </ligand>
</feature>
<feature type="binding site" evidence="1">
    <location>
        <position position="333"/>
    </location>
    <ligand>
        <name>substrate</name>
    </ligand>
</feature>
<feature type="binding site" evidence="1">
    <location>
        <begin position="449"/>
        <end position="450"/>
    </location>
    <ligand>
        <name>ATP</name>
        <dbReference type="ChEBI" id="CHEBI:30616"/>
    </ligand>
</feature>
<feature type="binding site" evidence="1">
    <location>
        <position position="455"/>
    </location>
    <ligand>
        <name>ATP</name>
        <dbReference type="ChEBI" id="CHEBI:30616"/>
    </ligand>
</feature>
<feature type="modified residue" description="N6-acetyllysine" evidence="1">
    <location>
        <position position="87"/>
    </location>
</feature>
<feature type="modified residue" description="N6-acetyllysine" evidence="1">
    <location>
        <position position="523"/>
    </location>
</feature>
<protein>
    <recommendedName>
        <fullName evidence="1">Phosphoenolpyruvate carboxykinase (ATP)</fullName>
        <shortName evidence="1">PCK</shortName>
        <shortName evidence="1">PEP carboxykinase</shortName>
        <shortName evidence="1">PEPCK</shortName>
        <ecNumber evidence="1">4.1.1.49</ecNumber>
    </recommendedName>
</protein>
<name>PCKA_ECOK1</name>
<sequence length="540" mass="59629">MRVNNGLTPQELEAYGISDVHDIVYNPSYDLLYQEELDPSLTGYERGVLTNLGAVAVDTGIFTGRSPKDKYIVRDDTTRDTFWWADKGKGKNDNKPLSPETWQHLKGLVTKQLSGKRLFVVDAFCGANPDTRLSVRFITEVAWQAHFVKNMFIRPSDEELAGFKPDFIVMNGAKCTNPQWKEQGLNSENFVAFNLTERMQLIGGTWYGGEMKKGMFSMMNYLLPLKGIASMHCSANVGEKGDVAVFFGLSGTGKTTLSTDPKRRLIGDDEHGWDDDGVFNFEGGCYAKTIKLSKEAEPEIYNAIRRDALLENVTVREDGTIDFDDGSKTENTRVSYPIYHIENIVKPVSKAGHATKVIFLTADAFGVLPPVSRLTADQTQYHFLSGFTAKLAGTERGITEPTPTFSACFGAAFLSLHPTQYAEVLVKRMQAAGAQAYLVNTGWNGTGKRISIKDTRAIIDAILNGSLDNAETFTLPMFNLAIPTELPGVDTKILDPRNTYASPEQWQEKAETLAKLFIDNFDKYTDTPAGAALVAAGPKL</sequence>
<keyword id="KW-0007">Acetylation</keyword>
<keyword id="KW-0067">ATP-binding</keyword>
<keyword id="KW-0963">Cytoplasm</keyword>
<keyword id="KW-0210">Decarboxylase</keyword>
<keyword id="KW-0312">Gluconeogenesis</keyword>
<keyword id="KW-0456">Lyase</keyword>
<keyword id="KW-0464">Manganese</keyword>
<keyword id="KW-0479">Metal-binding</keyword>
<keyword id="KW-0547">Nucleotide-binding</keyword>
<keyword id="KW-1185">Reference proteome</keyword>
<evidence type="ECO:0000255" key="1">
    <source>
        <dbReference type="HAMAP-Rule" id="MF_00453"/>
    </source>
</evidence>
<accession>A1AGS9</accession>
<gene>
    <name evidence="1" type="primary">pckA</name>
    <name type="ordered locus">Ecok1_33750</name>
    <name type="ORF">APECO1_3061</name>
</gene>
<comment type="function">
    <text evidence="1">Involved in the gluconeogenesis. Catalyzes the conversion of oxaloacetate (OAA) to phosphoenolpyruvate (PEP) through direct phosphoryl transfer between the nucleoside triphosphate and OAA.</text>
</comment>
<comment type="catalytic activity">
    <reaction evidence="1">
        <text>oxaloacetate + ATP = phosphoenolpyruvate + ADP + CO2</text>
        <dbReference type="Rhea" id="RHEA:18617"/>
        <dbReference type="ChEBI" id="CHEBI:16452"/>
        <dbReference type="ChEBI" id="CHEBI:16526"/>
        <dbReference type="ChEBI" id="CHEBI:30616"/>
        <dbReference type="ChEBI" id="CHEBI:58702"/>
        <dbReference type="ChEBI" id="CHEBI:456216"/>
        <dbReference type="EC" id="4.1.1.49"/>
    </reaction>
</comment>
<comment type="cofactor">
    <cofactor evidence="1">
        <name>Mn(2+)</name>
        <dbReference type="ChEBI" id="CHEBI:29035"/>
    </cofactor>
    <text evidence="1">Binds 1 Mn(2+) ion per subunit.</text>
</comment>
<comment type="pathway">
    <text evidence="1">Carbohydrate biosynthesis; gluconeogenesis.</text>
</comment>
<comment type="subunit">
    <text evidence="1">Monomer.</text>
</comment>
<comment type="subcellular location">
    <subcellularLocation>
        <location evidence="1">Cytoplasm</location>
    </subcellularLocation>
</comment>
<comment type="similarity">
    <text evidence="1">Belongs to the phosphoenolpyruvate carboxykinase (ATP) family.</text>
</comment>
<reference key="1">
    <citation type="journal article" date="2007" name="J. Bacteriol.">
        <title>The genome sequence of avian pathogenic Escherichia coli strain O1:K1:H7 shares strong similarities with human extraintestinal pathogenic E. coli genomes.</title>
        <authorList>
            <person name="Johnson T.J."/>
            <person name="Kariyawasam S."/>
            <person name="Wannemuehler Y."/>
            <person name="Mangiamele P."/>
            <person name="Johnson S.J."/>
            <person name="Doetkott C."/>
            <person name="Skyberg J.A."/>
            <person name="Lynne A.M."/>
            <person name="Johnson J.R."/>
            <person name="Nolan L.K."/>
        </authorList>
    </citation>
    <scope>NUCLEOTIDE SEQUENCE [LARGE SCALE GENOMIC DNA]</scope>
</reference>